<name>NADK_BORA1</name>
<accession>Q2KW92</accession>
<feature type="chain" id="PRO_1000005390" description="NAD kinase">
    <location>
        <begin position="1"/>
        <end position="299"/>
    </location>
</feature>
<feature type="active site" description="Proton acceptor" evidence="1">
    <location>
        <position position="71"/>
    </location>
</feature>
<feature type="binding site" evidence="1">
    <location>
        <begin position="71"/>
        <end position="72"/>
    </location>
    <ligand>
        <name>NAD(+)</name>
        <dbReference type="ChEBI" id="CHEBI:57540"/>
    </ligand>
</feature>
<feature type="binding site" evidence="1">
    <location>
        <begin position="145"/>
        <end position="146"/>
    </location>
    <ligand>
        <name>NAD(+)</name>
        <dbReference type="ChEBI" id="CHEBI:57540"/>
    </ligand>
</feature>
<feature type="binding site" evidence="1">
    <location>
        <position position="173"/>
    </location>
    <ligand>
        <name>NAD(+)</name>
        <dbReference type="ChEBI" id="CHEBI:57540"/>
    </ligand>
</feature>
<feature type="binding site" evidence="1">
    <location>
        <position position="175"/>
    </location>
    <ligand>
        <name>NAD(+)</name>
        <dbReference type="ChEBI" id="CHEBI:57540"/>
    </ligand>
</feature>
<feature type="binding site" evidence="1">
    <location>
        <begin position="186"/>
        <end position="191"/>
    </location>
    <ligand>
        <name>NAD(+)</name>
        <dbReference type="ChEBI" id="CHEBI:57540"/>
    </ligand>
</feature>
<feature type="binding site" evidence="1">
    <location>
        <position position="210"/>
    </location>
    <ligand>
        <name>NAD(+)</name>
        <dbReference type="ChEBI" id="CHEBI:57540"/>
    </ligand>
</feature>
<feature type="binding site" evidence="1">
    <location>
        <position position="248"/>
    </location>
    <ligand>
        <name>NAD(+)</name>
        <dbReference type="ChEBI" id="CHEBI:57540"/>
    </ligand>
</feature>
<dbReference type="EC" id="2.7.1.23" evidence="1"/>
<dbReference type="EMBL" id="AM167904">
    <property type="protein sequence ID" value="CAJ50333.1"/>
    <property type="molecule type" value="Genomic_DNA"/>
</dbReference>
<dbReference type="RefSeq" id="WP_012418364.1">
    <property type="nucleotide sequence ID" value="NC_010645.1"/>
</dbReference>
<dbReference type="SMR" id="Q2KW92"/>
<dbReference type="STRING" id="360910.BAV2722"/>
<dbReference type="GeneID" id="92934094"/>
<dbReference type="KEGG" id="bav:BAV2722"/>
<dbReference type="eggNOG" id="COG0061">
    <property type="taxonomic scope" value="Bacteria"/>
</dbReference>
<dbReference type="HOGENOM" id="CLU_008831_0_1_4"/>
<dbReference type="OrthoDB" id="9774737at2"/>
<dbReference type="Proteomes" id="UP000001977">
    <property type="component" value="Chromosome"/>
</dbReference>
<dbReference type="GO" id="GO:0005737">
    <property type="term" value="C:cytoplasm"/>
    <property type="evidence" value="ECO:0007669"/>
    <property type="project" value="UniProtKB-SubCell"/>
</dbReference>
<dbReference type="GO" id="GO:0005524">
    <property type="term" value="F:ATP binding"/>
    <property type="evidence" value="ECO:0007669"/>
    <property type="project" value="UniProtKB-KW"/>
</dbReference>
<dbReference type="GO" id="GO:0046872">
    <property type="term" value="F:metal ion binding"/>
    <property type="evidence" value="ECO:0007669"/>
    <property type="project" value="UniProtKB-UniRule"/>
</dbReference>
<dbReference type="GO" id="GO:0051287">
    <property type="term" value="F:NAD binding"/>
    <property type="evidence" value="ECO:0007669"/>
    <property type="project" value="UniProtKB-ARBA"/>
</dbReference>
<dbReference type="GO" id="GO:0003951">
    <property type="term" value="F:NAD+ kinase activity"/>
    <property type="evidence" value="ECO:0007669"/>
    <property type="project" value="UniProtKB-UniRule"/>
</dbReference>
<dbReference type="GO" id="GO:0019674">
    <property type="term" value="P:NAD metabolic process"/>
    <property type="evidence" value="ECO:0007669"/>
    <property type="project" value="InterPro"/>
</dbReference>
<dbReference type="GO" id="GO:0006741">
    <property type="term" value="P:NADP biosynthetic process"/>
    <property type="evidence" value="ECO:0007669"/>
    <property type="project" value="UniProtKB-UniRule"/>
</dbReference>
<dbReference type="Gene3D" id="3.40.50.10330">
    <property type="entry name" value="Probable inorganic polyphosphate/atp-NAD kinase, domain 1"/>
    <property type="match status" value="1"/>
</dbReference>
<dbReference type="Gene3D" id="2.60.200.30">
    <property type="entry name" value="Probable inorganic polyphosphate/atp-NAD kinase, domain 2"/>
    <property type="match status" value="1"/>
</dbReference>
<dbReference type="HAMAP" id="MF_00361">
    <property type="entry name" value="NAD_kinase"/>
    <property type="match status" value="1"/>
</dbReference>
<dbReference type="InterPro" id="IPR017438">
    <property type="entry name" value="ATP-NAD_kinase_N"/>
</dbReference>
<dbReference type="InterPro" id="IPR017437">
    <property type="entry name" value="ATP-NAD_kinase_PpnK-typ_C"/>
</dbReference>
<dbReference type="InterPro" id="IPR016064">
    <property type="entry name" value="NAD/diacylglycerol_kinase_sf"/>
</dbReference>
<dbReference type="InterPro" id="IPR002504">
    <property type="entry name" value="NADK"/>
</dbReference>
<dbReference type="NCBIfam" id="NF002561">
    <property type="entry name" value="PRK02155.1"/>
    <property type="match status" value="1"/>
</dbReference>
<dbReference type="PANTHER" id="PTHR20275">
    <property type="entry name" value="NAD KINASE"/>
    <property type="match status" value="1"/>
</dbReference>
<dbReference type="PANTHER" id="PTHR20275:SF0">
    <property type="entry name" value="NAD KINASE"/>
    <property type="match status" value="1"/>
</dbReference>
<dbReference type="Pfam" id="PF01513">
    <property type="entry name" value="NAD_kinase"/>
    <property type="match status" value="1"/>
</dbReference>
<dbReference type="Pfam" id="PF20143">
    <property type="entry name" value="NAD_kinase_C"/>
    <property type="match status" value="1"/>
</dbReference>
<dbReference type="SUPFAM" id="SSF111331">
    <property type="entry name" value="NAD kinase/diacylglycerol kinase-like"/>
    <property type="match status" value="1"/>
</dbReference>
<protein>
    <recommendedName>
        <fullName evidence="1">NAD kinase</fullName>
        <ecNumber evidence="1">2.7.1.23</ecNumber>
    </recommendedName>
    <alternativeName>
        <fullName evidence="1">ATP-dependent NAD kinase</fullName>
    </alternativeName>
</protein>
<proteinExistence type="inferred from homology"/>
<gene>
    <name evidence="1" type="primary">nadK</name>
    <name type="ordered locus">BAV2722</name>
</gene>
<keyword id="KW-0067">ATP-binding</keyword>
<keyword id="KW-0963">Cytoplasm</keyword>
<keyword id="KW-0418">Kinase</keyword>
<keyword id="KW-0520">NAD</keyword>
<keyword id="KW-0521">NADP</keyword>
<keyword id="KW-0547">Nucleotide-binding</keyword>
<keyword id="KW-1185">Reference proteome</keyword>
<keyword id="KW-0808">Transferase</keyword>
<evidence type="ECO:0000255" key="1">
    <source>
        <dbReference type="HAMAP-Rule" id="MF_00361"/>
    </source>
</evidence>
<organism>
    <name type="scientific">Bordetella avium (strain 197N)</name>
    <dbReference type="NCBI Taxonomy" id="360910"/>
    <lineage>
        <taxon>Bacteria</taxon>
        <taxon>Pseudomonadati</taxon>
        <taxon>Pseudomonadota</taxon>
        <taxon>Betaproteobacteria</taxon>
        <taxon>Burkholderiales</taxon>
        <taxon>Alcaligenaceae</taxon>
        <taxon>Bordetella</taxon>
    </lineage>
</organism>
<comment type="function">
    <text evidence="1">Involved in the regulation of the intracellular balance of NAD and NADP, and is a key enzyme in the biosynthesis of NADP. Catalyzes specifically the phosphorylation on 2'-hydroxyl of the adenosine moiety of NAD to yield NADP.</text>
</comment>
<comment type="catalytic activity">
    <reaction evidence="1">
        <text>NAD(+) + ATP = ADP + NADP(+) + H(+)</text>
        <dbReference type="Rhea" id="RHEA:18629"/>
        <dbReference type="ChEBI" id="CHEBI:15378"/>
        <dbReference type="ChEBI" id="CHEBI:30616"/>
        <dbReference type="ChEBI" id="CHEBI:57540"/>
        <dbReference type="ChEBI" id="CHEBI:58349"/>
        <dbReference type="ChEBI" id="CHEBI:456216"/>
        <dbReference type="EC" id="2.7.1.23"/>
    </reaction>
</comment>
<comment type="cofactor">
    <cofactor evidence="1">
        <name>a divalent metal cation</name>
        <dbReference type="ChEBI" id="CHEBI:60240"/>
    </cofactor>
</comment>
<comment type="subcellular location">
    <subcellularLocation>
        <location evidence="1">Cytoplasm</location>
    </subcellularLocation>
</comment>
<comment type="similarity">
    <text evidence="1">Belongs to the NAD kinase family.</text>
</comment>
<sequence length="299" mass="32320">MHFPIVALIGRYQDTGLDAPLRALAAMLTQAGRRVLVDADTARNTAVHEYPVATMQEIGESASLAVVMGGDGTVLGVARHLAPYGVPLIGINHGRLGFITDIPLQDAHDALARVLDGNFQIEERMLLQGSVWRGDALMYTASALNDVVLNRAGRGGMIEMRVELDGVYMYTQRADGLIIATPTGSTAYALSANGPLLHPGLNAMVLVPVAPQSLSNRPIVIPDTGVLNMTLTAIGRVETGASAHFDMQTWSDLQLGDRITVQRAPHTARLVHPQGYSFFSTLRRKLHWNQMPQVSDNIE</sequence>
<reference key="1">
    <citation type="journal article" date="2006" name="J. Bacteriol.">
        <title>Comparison of the genome sequence of the poultry pathogen Bordetella avium with those of B. bronchiseptica, B. pertussis, and B. parapertussis reveals extensive diversity in surface structures associated with host interaction.</title>
        <authorList>
            <person name="Sebaihia M."/>
            <person name="Preston A."/>
            <person name="Maskell D.J."/>
            <person name="Kuzmiak H."/>
            <person name="Connell T.D."/>
            <person name="King N.D."/>
            <person name="Orndorff P.E."/>
            <person name="Miyamoto D.M."/>
            <person name="Thomson N.R."/>
            <person name="Harris D."/>
            <person name="Goble A."/>
            <person name="Lord A."/>
            <person name="Murphy L."/>
            <person name="Quail M.A."/>
            <person name="Rutter S."/>
            <person name="Squares R."/>
            <person name="Squares S."/>
            <person name="Woodward J."/>
            <person name="Parkhill J."/>
            <person name="Temple L.M."/>
        </authorList>
    </citation>
    <scope>NUCLEOTIDE SEQUENCE [LARGE SCALE GENOMIC DNA]</scope>
    <source>
        <strain>197N</strain>
    </source>
</reference>